<accession>Q1R6R8</accession>
<dbReference type="EMBL" id="CP000243">
    <property type="protein sequence ID" value="ABE08946.1"/>
    <property type="molecule type" value="Genomic_DNA"/>
</dbReference>
<dbReference type="RefSeq" id="WP_000804955.1">
    <property type="nucleotide sequence ID" value="NZ_CP064825.1"/>
</dbReference>
<dbReference type="SMR" id="Q1R6R8"/>
<dbReference type="KEGG" id="eci:UTI89_C3499"/>
<dbReference type="HOGENOM" id="CLU_005170_7_0_6"/>
<dbReference type="Proteomes" id="UP000001952">
    <property type="component" value="Chromosome"/>
</dbReference>
<dbReference type="GO" id="GO:0005886">
    <property type="term" value="C:plasma membrane"/>
    <property type="evidence" value="ECO:0007669"/>
    <property type="project" value="UniProtKB-SubCell"/>
</dbReference>
<dbReference type="GO" id="GO:0015297">
    <property type="term" value="F:antiporter activity"/>
    <property type="evidence" value="ECO:0007669"/>
    <property type="project" value="UniProtKB-KW"/>
</dbReference>
<dbReference type="InterPro" id="IPR030676">
    <property type="entry name" value="CitT-rel"/>
</dbReference>
<dbReference type="InterPro" id="IPR001898">
    <property type="entry name" value="SLC13A/DASS"/>
</dbReference>
<dbReference type="NCBIfam" id="TIGR00785">
    <property type="entry name" value="dass"/>
    <property type="match status" value="1"/>
</dbReference>
<dbReference type="PANTHER" id="PTHR42826">
    <property type="entry name" value="DICARBOXYLATE TRANSPORTER 2.1, CHLOROPLASTIC"/>
    <property type="match status" value="1"/>
</dbReference>
<dbReference type="Pfam" id="PF00939">
    <property type="entry name" value="Na_sulph_symp"/>
    <property type="match status" value="1"/>
</dbReference>
<dbReference type="PIRSF" id="PIRSF002457">
    <property type="entry name" value="DASS"/>
    <property type="match status" value="1"/>
</dbReference>
<name>TTDT_ECOUT</name>
<sequence>MKPSTEWWRYLAPLAVIAIIALLPLPAGLESHTWLYFAVFTGVIVGLILEPVPGAVVAMVGISIIAILSPWLLFSPEQLAQPGFKFTAKSLSWAVSGFSNSVIWLIFAAFMFGTGYEKTGLGRRIALILVKKMGHRTLFLGYAVMFSELILAPVTPSNSARGAGIIYPIIRNLPPLYQSQPNDSSSRSIGSYIMWMGIVADCVTSAIFLTAMAPNLLLIGLMKSASNATLSWGDWFLGMLPLSILLVLLVPWLAYVLYPPILKSGDQVPRWAETELQAMGPLCSREKRMLGLMVGALVLWIFGGDYIDAAMVGYSVVALMLLLRIICWDDIVSNKAAWNVFFWLASLITLATGLNNTGFISWFGKLLAGSLSGYSPTIVMVALIVVFYLLRYFFASATAYTSALAPMMIAAALAMPEIPLPVFCLMVGAAIGLGSILTPYATGPSPIYYGSGYLPTVDYWRLGAIFGLIFLVLLVITGLLWMPMVLL</sequence>
<comment type="function">
    <text evidence="1">Catalyzes the uptake of tartrate in exchange for intracellular succinate. Essential for anaerobic L-tartrate fermentation.</text>
</comment>
<comment type="catalytic activity">
    <reaction evidence="1">
        <text>(2R,3R)-tartrate(out) + succinate(in) = (2R,3R)-tartrate(in) + succinate(out)</text>
        <dbReference type="Rhea" id="RHEA:29259"/>
        <dbReference type="ChEBI" id="CHEBI:30031"/>
        <dbReference type="ChEBI" id="CHEBI:30924"/>
    </reaction>
    <physiologicalReaction direction="left-to-right" evidence="1">
        <dbReference type="Rhea" id="RHEA:29260"/>
    </physiologicalReaction>
</comment>
<comment type="subcellular location">
    <subcellularLocation>
        <location evidence="1">Cell inner membrane</location>
        <topology evidence="2">Multi-pass membrane protein</topology>
    </subcellularLocation>
</comment>
<comment type="similarity">
    <text evidence="3">Belongs to the SLC13A/DASS transporter (TC 2.A.47) family. DIT1 subfamily.</text>
</comment>
<evidence type="ECO:0000250" key="1">
    <source>
        <dbReference type="UniProtKB" id="P39414"/>
    </source>
</evidence>
<evidence type="ECO:0000255" key="2"/>
<evidence type="ECO:0000305" key="3"/>
<organism>
    <name type="scientific">Escherichia coli (strain UTI89 / UPEC)</name>
    <dbReference type="NCBI Taxonomy" id="364106"/>
    <lineage>
        <taxon>Bacteria</taxon>
        <taxon>Pseudomonadati</taxon>
        <taxon>Pseudomonadota</taxon>
        <taxon>Gammaproteobacteria</taxon>
        <taxon>Enterobacterales</taxon>
        <taxon>Enterobacteriaceae</taxon>
        <taxon>Escherichia</taxon>
    </lineage>
</organism>
<proteinExistence type="inferred from homology"/>
<gene>
    <name type="primary">ttdT</name>
    <name type="ordered locus">UTI89_C3499</name>
</gene>
<reference key="1">
    <citation type="journal article" date="2006" name="Proc. Natl. Acad. Sci. U.S.A.">
        <title>Identification of genes subject to positive selection in uropathogenic strains of Escherichia coli: a comparative genomics approach.</title>
        <authorList>
            <person name="Chen S.L."/>
            <person name="Hung C.-S."/>
            <person name="Xu J."/>
            <person name="Reigstad C.S."/>
            <person name="Magrini V."/>
            <person name="Sabo A."/>
            <person name="Blasiar D."/>
            <person name="Bieri T."/>
            <person name="Meyer R.R."/>
            <person name="Ozersky P."/>
            <person name="Armstrong J.R."/>
            <person name="Fulton R.S."/>
            <person name="Latreille J.P."/>
            <person name="Spieth J."/>
            <person name="Hooton T.M."/>
            <person name="Mardis E.R."/>
            <person name="Hultgren S.J."/>
            <person name="Gordon J.I."/>
        </authorList>
    </citation>
    <scope>NUCLEOTIDE SEQUENCE [LARGE SCALE GENOMIC DNA]</scope>
    <source>
        <strain>UTI89 / UPEC</strain>
    </source>
</reference>
<protein>
    <recommendedName>
        <fullName evidence="1">L-tartrate/succinate antiporter</fullName>
    </recommendedName>
    <alternativeName>
        <fullName>Tartrate carrier</fullName>
    </alternativeName>
    <alternativeName>
        <fullName>Tartrate transporter</fullName>
    </alternativeName>
</protein>
<keyword id="KW-0050">Antiport</keyword>
<keyword id="KW-0997">Cell inner membrane</keyword>
<keyword id="KW-1003">Cell membrane</keyword>
<keyword id="KW-0472">Membrane</keyword>
<keyword id="KW-0812">Transmembrane</keyword>
<keyword id="KW-1133">Transmembrane helix</keyword>
<keyword id="KW-0813">Transport</keyword>
<feature type="chain" id="PRO_0000262714" description="L-tartrate/succinate antiporter">
    <location>
        <begin position="1"/>
        <end position="487"/>
    </location>
</feature>
<feature type="transmembrane region" description="Helical" evidence="2">
    <location>
        <begin position="10"/>
        <end position="30"/>
    </location>
</feature>
<feature type="transmembrane region" description="Helical" evidence="2">
    <location>
        <begin position="33"/>
        <end position="53"/>
    </location>
</feature>
<feature type="transmembrane region" description="Helical" evidence="2">
    <location>
        <begin position="54"/>
        <end position="74"/>
    </location>
</feature>
<feature type="transmembrane region" description="Helical" evidence="2">
    <location>
        <begin position="93"/>
        <end position="113"/>
    </location>
</feature>
<feature type="transmembrane region" description="Helical" evidence="2">
    <location>
        <begin position="137"/>
        <end position="157"/>
    </location>
</feature>
<feature type="transmembrane region" description="Helical" evidence="2">
    <location>
        <begin position="189"/>
        <end position="209"/>
    </location>
</feature>
<feature type="transmembrane region" description="Helical" evidence="2">
    <location>
        <begin position="236"/>
        <end position="256"/>
    </location>
</feature>
<feature type="transmembrane region" description="Helical" evidence="2">
    <location>
        <begin position="292"/>
        <end position="312"/>
    </location>
</feature>
<feature type="transmembrane region" description="Helical" evidence="2">
    <location>
        <begin position="313"/>
        <end position="333"/>
    </location>
</feature>
<feature type="transmembrane region" description="Helical" evidence="2">
    <location>
        <begin position="340"/>
        <end position="360"/>
    </location>
</feature>
<feature type="transmembrane region" description="Helical" evidence="2">
    <location>
        <begin position="370"/>
        <end position="390"/>
    </location>
</feature>
<feature type="transmembrane region" description="Helical" evidence="2">
    <location>
        <begin position="393"/>
        <end position="413"/>
    </location>
</feature>
<feature type="transmembrane region" description="Helical" evidence="2">
    <location>
        <begin position="418"/>
        <end position="438"/>
    </location>
</feature>
<feature type="transmembrane region" description="Helical" evidence="2">
    <location>
        <begin position="462"/>
        <end position="482"/>
    </location>
</feature>